<feature type="signal peptide" evidence="1">
    <location>
        <begin position="1"/>
        <end position="20"/>
    </location>
</feature>
<feature type="chain" id="PRO_0000021995" description="Virulence protein PagD">
    <location>
        <begin position="21"/>
        <end position="87"/>
    </location>
</feature>
<feature type="region of interest" description="Disordered" evidence="2">
    <location>
        <begin position="46"/>
        <end position="87"/>
    </location>
</feature>
<feature type="compositionally biased region" description="Polar residues" evidence="2">
    <location>
        <begin position="57"/>
        <end position="66"/>
    </location>
</feature>
<organism>
    <name type="scientific">Salmonella typhimurium (strain LT2 / SGSC1412 / ATCC 700720)</name>
    <dbReference type="NCBI Taxonomy" id="99287"/>
    <lineage>
        <taxon>Bacteria</taxon>
        <taxon>Pseudomonadati</taxon>
        <taxon>Pseudomonadota</taxon>
        <taxon>Gammaproteobacteria</taxon>
        <taxon>Enterobacterales</taxon>
        <taxon>Enterobacteriaceae</taxon>
        <taxon>Salmonella</taxon>
    </lineage>
</organism>
<accession>Q56029</accession>
<comment type="function">
    <text>Putative function in virulence. Could be involved in promoting S.typhimurium survival within macrophages.</text>
</comment>
<dbReference type="EMBL" id="U31849">
    <property type="protein sequence ID" value="AAA82994.1"/>
    <property type="molecule type" value="Genomic_DNA"/>
</dbReference>
<dbReference type="EMBL" id="AE006468">
    <property type="protein sequence ID" value="AAL20173.1"/>
    <property type="molecule type" value="Genomic_DNA"/>
</dbReference>
<dbReference type="RefSeq" id="NP_460214.1">
    <property type="nucleotide sequence ID" value="NC_003197.2"/>
</dbReference>
<dbReference type="RefSeq" id="WP_001535993.1">
    <property type="nucleotide sequence ID" value="NC_003197.2"/>
</dbReference>
<dbReference type="STRING" id="99287.STM1244"/>
<dbReference type="PaxDb" id="99287-STM1244"/>
<dbReference type="GeneID" id="1252762"/>
<dbReference type="KEGG" id="stm:STM1244"/>
<dbReference type="PATRIC" id="fig|99287.12.peg.1317"/>
<dbReference type="HOGENOM" id="CLU_174055_0_0_6"/>
<dbReference type="OMA" id="NAYCARS"/>
<dbReference type="BioCyc" id="SENT99287:STM1244-MONOMER"/>
<dbReference type="Proteomes" id="UP000001014">
    <property type="component" value="Chromosome"/>
</dbReference>
<gene>
    <name type="primary">pagD</name>
    <name type="ordered locus">STM1244</name>
</gene>
<proteinExistence type="inferred from homology"/>
<sequence>MKHHAFMLWSLLIFSFHVLASSGHCSGLQQASWDIFIYDFGSKTPQPPTNTDKKQARQISSPSCPTTKPMMSAPVNDARKGNTFSRT</sequence>
<keyword id="KW-1185">Reference proteome</keyword>
<keyword id="KW-0732">Signal</keyword>
<keyword id="KW-0843">Virulence</keyword>
<reference key="1">
    <citation type="journal article" date="1995" name="J. Bacteriol.">
        <title>Characterization of the Salmonella typhimurium pagC/pagD chromosomal region.</title>
        <authorList>
            <person name="Gunn J.S."/>
            <person name="Alpuche-Aranda C.M."/>
            <person name="Loomis W.P."/>
            <person name="Belden W.J."/>
            <person name="Miller S.I."/>
        </authorList>
    </citation>
    <scope>NUCLEOTIDE SEQUENCE [GENOMIC DNA]</scope>
    <source>
        <strain>ATCC 14028 / SGSG 2980 / CDC 6516-60 / NCTC 12023</strain>
    </source>
</reference>
<reference key="2">
    <citation type="journal article" date="2001" name="Nature">
        <title>Complete genome sequence of Salmonella enterica serovar Typhimurium LT2.</title>
        <authorList>
            <person name="McClelland M."/>
            <person name="Sanderson K.E."/>
            <person name="Spieth J."/>
            <person name="Clifton S.W."/>
            <person name="Latreille P."/>
            <person name="Courtney L."/>
            <person name="Porwollik S."/>
            <person name="Ali J."/>
            <person name="Dante M."/>
            <person name="Du F."/>
            <person name="Hou S."/>
            <person name="Layman D."/>
            <person name="Leonard S."/>
            <person name="Nguyen C."/>
            <person name="Scott K."/>
            <person name="Holmes A."/>
            <person name="Grewal N."/>
            <person name="Mulvaney E."/>
            <person name="Ryan E."/>
            <person name="Sun H."/>
            <person name="Florea L."/>
            <person name="Miller W."/>
            <person name="Stoneking T."/>
            <person name="Nhan M."/>
            <person name="Waterston R."/>
            <person name="Wilson R.K."/>
        </authorList>
    </citation>
    <scope>NUCLEOTIDE SEQUENCE [LARGE SCALE GENOMIC DNA]</scope>
    <source>
        <strain>LT2 / SGSC1412 / ATCC 700720</strain>
    </source>
</reference>
<protein>
    <recommendedName>
        <fullName>Virulence protein PagD</fullName>
    </recommendedName>
</protein>
<evidence type="ECO:0000255" key="1"/>
<evidence type="ECO:0000256" key="2">
    <source>
        <dbReference type="SAM" id="MobiDB-lite"/>
    </source>
</evidence>
<name>PAGD_SALTY</name>